<name>RECQ4_HUMAN</name>
<organism>
    <name type="scientific">Homo sapiens</name>
    <name type="common">Human</name>
    <dbReference type="NCBI Taxonomy" id="9606"/>
    <lineage>
        <taxon>Eukaryota</taxon>
        <taxon>Metazoa</taxon>
        <taxon>Chordata</taxon>
        <taxon>Craniata</taxon>
        <taxon>Vertebrata</taxon>
        <taxon>Euteleostomi</taxon>
        <taxon>Mammalia</taxon>
        <taxon>Eutheria</taxon>
        <taxon>Euarchontoglires</taxon>
        <taxon>Primates</taxon>
        <taxon>Haplorrhini</taxon>
        <taxon>Catarrhini</taxon>
        <taxon>Hominidae</taxon>
        <taxon>Homo</taxon>
    </lineage>
</organism>
<accession>O94761</accession>
<accession>A0A087WZ30</accession>
<accession>Q3Y424</accession>
<accession>Q96DW2</accession>
<accession>Q96F55</accession>
<dbReference type="EC" id="5.6.2.4" evidence="17"/>
<dbReference type="EMBL" id="AB006532">
    <property type="protein sequence ID" value="BAA74453.1"/>
    <property type="molecule type" value="mRNA"/>
</dbReference>
<dbReference type="EMBL" id="AB026546">
    <property type="protein sequence ID" value="BAA86899.1"/>
    <property type="molecule type" value="Genomic_DNA"/>
</dbReference>
<dbReference type="EMBL" id="DQ176868">
    <property type="protein sequence ID" value="AAZ85145.1"/>
    <property type="molecule type" value="Genomic_DNA"/>
</dbReference>
<dbReference type="EMBL" id="AC084125">
    <property type="status" value="NOT_ANNOTATED_CDS"/>
    <property type="molecule type" value="Genomic_DNA"/>
</dbReference>
<dbReference type="EMBL" id="KF495717">
    <property type="status" value="NOT_ANNOTATED_CDS"/>
    <property type="molecule type" value="Genomic_DNA"/>
</dbReference>
<dbReference type="EMBL" id="BC011602">
    <property type="protein sequence ID" value="AAH11602.2"/>
    <property type="molecule type" value="mRNA"/>
</dbReference>
<dbReference type="EMBL" id="BC013277">
    <property type="protein sequence ID" value="AAH13277.2"/>
    <property type="status" value="ALT_INIT"/>
    <property type="molecule type" value="mRNA"/>
</dbReference>
<dbReference type="CCDS" id="CCDS75804.1"/>
<dbReference type="RefSeq" id="NP_004251.4">
    <property type="nucleotide sequence ID" value="NM_004260.4"/>
</dbReference>
<dbReference type="PDB" id="2KMU">
    <property type="method" value="NMR"/>
    <property type="chains" value="A=1-54"/>
</dbReference>
<dbReference type="PDB" id="5LST">
    <property type="method" value="X-ray"/>
    <property type="resolution" value="2.75 A"/>
    <property type="chains" value="A=427-1116"/>
</dbReference>
<dbReference type="PDBsum" id="2KMU"/>
<dbReference type="PDBsum" id="5LST"/>
<dbReference type="BMRB" id="O94761"/>
<dbReference type="SMR" id="O94761"/>
<dbReference type="BioGRID" id="114798">
    <property type="interactions" value="1454"/>
</dbReference>
<dbReference type="DIP" id="DIP-48475N"/>
<dbReference type="FunCoup" id="O94761">
    <property type="interactions" value="2288"/>
</dbReference>
<dbReference type="IntAct" id="O94761">
    <property type="interactions" value="78"/>
</dbReference>
<dbReference type="STRING" id="9606.ENSP00000482313"/>
<dbReference type="GlyGen" id="O94761">
    <property type="glycosylation" value="3 sites, 1 O-linked glycan (3 sites)"/>
</dbReference>
<dbReference type="iPTMnet" id="O94761"/>
<dbReference type="PhosphoSitePlus" id="O94761"/>
<dbReference type="BioMuta" id="RECQL4"/>
<dbReference type="jPOST" id="O94761"/>
<dbReference type="MassIVE" id="O94761"/>
<dbReference type="PaxDb" id="9606-ENSP00000482313"/>
<dbReference type="PeptideAtlas" id="O94761"/>
<dbReference type="ProteomicsDB" id="50424"/>
<dbReference type="Pumba" id="O94761"/>
<dbReference type="Antibodypedia" id="4498">
    <property type="antibodies" value="142 antibodies from 22 providers"/>
</dbReference>
<dbReference type="DNASU" id="9401"/>
<dbReference type="Ensembl" id="ENST00000617875.6">
    <property type="protein sequence ID" value="ENSP00000482313.2"/>
    <property type="gene ID" value="ENSG00000160957.15"/>
</dbReference>
<dbReference type="GeneID" id="9401"/>
<dbReference type="KEGG" id="hsa:9401"/>
<dbReference type="MANE-Select" id="ENST00000617875.6">
    <property type="protein sequence ID" value="ENSP00000482313.2"/>
    <property type="RefSeq nucleotide sequence ID" value="NM_004260.4"/>
    <property type="RefSeq protein sequence ID" value="NP_004251.4"/>
</dbReference>
<dbReference type="AGR" id="HGNC:9949"/>
<dbReference type="CTD" id="9401"/>
<dbReference type="DisGeNET" id="9401"/>
<dbReference type="GeneCards" id="RECQL4"/>
<dbReference type="GeneReviews" id="RECQL4"/>
<dbReference type="HGNC" id="HGNC:9949">
    <property type="gene designation" value="RECQL4"/>
</dbReference>
<dbReference type="HPA" id="ENSG00000160957">
    <property type="expression patterns" value="Tissue enhanced (bone marrow, testis)"/>
</dbReference>
<dbReference type="MalaCards" id="RECQL4"/>
<dbReference type="MIM" id="218600">
    <property type="type" value="phenotype"/>
</dbReference>
<dbReference type="MIM" id="266280">
    <property type="type" value="phenotype"/>
</dbReference>
<dbReference type="MIM" id="268400">
    <property type="type" value="phenotype"/>
</dbReference>
<dbReference type="MIM" id="603780">
    <property type="type" value="gene"/>
</dbReference>
<dbReference type="neXtProt" id="NX_O94761"/>
<dbReference type="OpenTargets" id="ENSG00000160957"/>
<dbReference type="Orphanet" id="1225">
    <property type="disease" value="Baller-Gerold syndrome"/>
</dbReference>
<dbReference type="Orphanet" id="3021">
    <property type="disease" value="RAPADILINO syndrome"/>
</dbReference>
<dbReference type="Orphanet" id="221016">
    <property type="disease" value="Rothmund-Thomson syndrome type 2"/>
</dbReference>
<dbReference type="PharmGKB" id="PA34316"/>
<dbReference type="VEuPathDB" id="HostDB:ENSG00000160957"/>
<dbReference type="eggNOG" id="KOG0351">
    <property type="taxonomic scope" value="Eukaryota"/>
</dbReference>
<dbReference type="GeneTree" id="ENSGT00940000160387"/>
<dbReference type="InParanoid" id="O94761"/>
<dbReference type="OMA" id="HAGMCSQ"/>
<dbReference type="OrthoDB" id="18781at2759"/>
<dbReference type="PAN-GO" id="O94761">
    <property type="GO annotations" value="7 GO annotations based on evolutionary models"/>
</dbReference>
<dbReference type="PhylomeDB" id="O94761"/>
<dbReference type="BRENDA" id="3.6.4.12">
    <property type="organism ID" value="2681"/>
</dbReference>
<dbReference type="PathwayCommons" id="O94761"/>
<dbReference type="SignaLink" id="O94761"/>
<dbReference type="SIGNOR" id="O94761"/>
<dbReference type="BioGRID-ORCS" id="9401">
    <property type="hits" value="38 hits in 321 CRISPR screens"/>
</dbReference>
<dbReference type="ChiTaRS" id="RECQL4">
    <property type="organism name" value="human"/>
</dbReference>
<dbReference type="EvolutionaryTrace" id="O94761"/>
<dbReference type="GeneWiki" id="RECQL4"/>
<dbReference type="GenomeRNAi" id="9401"/>
<dbReference type="Pharos" id="O94761">
    <property type="development level" value="Tbio"/>
</dbReference>
<dbReference type="PRO" id="PR:O94761"/>
<dbReference type="Proteomes" id="UP000005640">
    <property type="component" value="Chromosome 8"/>
</dbReference>
<dbReference type="RNAct" id="O94761">
    <property type="molecule type" value="protein"/>
</dbReference>
<dbReference type="Bgee" id="ENSG00000160957">
    <property type="expression patterns" value="Expressed in lower esophagus mucosa and 140 other cell types or tissues"/>
</dbReference>
<dbReference type="ExpressionAtlas" id="O94761">
    <property type="expression patterns" value="baseline and differential"/>
</dbReference>
<dbReference type="GO" id="GO:0005694">
    <property type="term" value="C:chromosome"/>
    <property type="evidence" value="ECO:0000318"/>
    <property type="project" value="GO_Central"/>
</dbReference>
<dbReference type="GO" id="GO:0000781">
    <property type="term" value="C:chromosome, telomeric region"/>
    <property type="evidence" value="ECO:0000315"/>
    <property type="project" value="BHF-UCL"/>
</dbReference>
<dbReference type="GO" id="GO:0005737">
    <property type="term" value="C:cytoplasm"/>
    <property type="evidence" value="ECO:0000318"/>
    <property type="project" value="GO_Central"/>
</dbReference>
<dbReference type="GO" id="GO:0016020">
    <property type="term" value="C:membrane"/>
    <property type="evidence" value="ECO:0007005"/>
    <property type="project" value="UniProtKB"/>
</dbReference>
<dbReference type="GO" id="GO:0005654">
    <property type="term" value="C:nucleoplasm"/>
    <property type="evidence" value="ECO:0000314"/>
    <property type="project" value="HPA"/>
</dbReference>
<dbReference type="GO" id="GO:0005634">
    <property type="term" value="C:nucleus"/>
    <property type="evidence" value="ECO:0000318"/>
    <property type="project" value="GO_Central"/>
</dbReference>
<dbReference type="GO" id="GO:0005524">
    <property type="term" value="F:ATP binding"/>
    <property type="evidence" value="ECO:0007669"/>
    <property type="project" value="UniProtKB-KW"/>
</dbReference>
<dbReference type="GO" id="GO:0016887">
    <property type="term" value="F:ATP hydrolysis activity"/>
    <property type="evidence" value="ECO:0007669"/>
    <property type="project" value="RHEA"/>
</dbReference>
<dbReference type="GO" id="GO:0000405">
    <property type="term" value="F:bubble DNA binding"/>
    <property type="evidence" value="ECO:0000314"/>
    <property type="project" value="UniProtKB"/>
</dbReference>
<dbReference type="GO" id="GO:1990814">
    <property type="term" value="F:DNA/DNA annealing activity"/>
    <property type="evidence" value="ECO:0000314"/>
    <property type="project" value="GO_Central"/>
</dbReference>
<dbReference type="GO" id="GO:0009378">
    <property type="term" value="F:four-way junction helicase activity"/>
    <property type="evidence" value="ECO:0000318"/>
    <property type="project" value="GO_Central"/>
</dbReference>
<dbReference type="GO" id="GO:0004386">
    <property type="term" value="F:helicase activity"/>
    <property type="evidence" value="ECO:0000304"/>
    <property type="project" value="BHF-UCL"/>
</dbReference>
<dbReference type="GO" id="GO:0046872">
    <property type="term" value="F:metal ion binding"/>
    <property type="evidence" value="ECO:0007669"/>
    <property type="project" value="UniProtKB-KW"/>
</dbReference>
<dbReference type="GO" id="GO:0032357">
    <property type="term" value="F:oxidized purine DNA binding"/>
    <property type="evidence" value="ECO:0000314"/>
    <property type="project" value="BHF-UCL"/>
</dbReference>
<dbReference type="GO" id="GO:0061821">
    <property type="term" value="F:telomeric D-loop binding"/>
    <property type="evidence" value="ECO:0000314"/>
    <property type="project" value="BHF-UCL"/>
</dbReference>
<dbReference type="GO" id="GO:0006281">
    <property type="term" value="P:DNA repair"/>
    <property type="evidence" value="ECO:0000304"/>
    <property type="project" value="ProtInc"/>
</dbReference>
<dbReference type="GO" id="GO:0006260">
    <property type="term" value="P:DNA replication"/>
    <property type="evidence" value="ECO:0000315"/>
    <property type="project" value="BHF-UCL"/>
</dbReference>
<dbReference type="GO" id="GO:0000724">
    <property type="term" value="P:double-strand break repair via homologous recombination"/>
    <property type="evidence" value="ECO:0000318"/>
    <property type="project" value="GO_Central"/>
</dbReference>
<dbReference type="GO" id="GO:0000723">
    <property type="term" value="P:telomere maintenance"/>
    <property type="evidence" value="ECO:0000315"/>
    <property type="project" value="BHF-UCL"/>
</dbReference>
<dbReference type="GO" id="GO:0061820">
    <property type="term" value="P:telomeric D-loop disassembly"/>
    <property type="evidence" value="ECO:0000314"/>
    <property type="project" value="BHF-UCL"/>
</dbReference>
<dbReference type="CDD" id="cd18018">
    <property type="entry name" value="DEXHc_RecQ4-like"/>
    <property type="match status" value="1"/>
</dbReference>
<dbReference type="CDD" id="cd22289">
    <property type="entry name" value="RecQL4_SLD2_NTD"/>
    <property type="match status" value="1"/>
</dbReference>
<dbReference type="CDD" id="cd18794">
    <property type="entry name" value="SF2_C_RecQ"/>
    <property type="match status" value="1"/>
</dbReference>
<dbReference type="FunFam" id="3.40.50.300:FF:000772">
    <property type="entry name" value="ATP-dependent DNA helicase Q4"/>
    <property type="match status" value="1"/>
</dbReference>
<dbReference type="FunFam" id="1.10.10.1460:FF:000001">
    <property type="entry name" value="DNA replication regulator Sld2"/>
    <property type="match status" value="1"/>
</dbReference>
<dbReference type="FunFam" id="3.40.50.300:FF:001084">
    <property type="entry name" value="RecQ like helicase 4"/>
    <property type="match status" value="1"/>
</dbReference>
<dbReference type="Gene3D" id="1.10.10.1460">
    <property type="match status" value="1"/>
</dbReference>
<dbReference type="Gene3D" id="3.40.50.300">
    <property type="entry name" value="P-loop containing nucleotide triphosphate hydrolases"/>
    <property type="match status" value="2"/>
</dbReference>
<dbReference type="InterPro" id="IPR011545">
    <property type="entry name" value="DEAD/DEAH_box_helicase_dom"/>
</dbReference>
<dbReference type="InterPro" id="IPR004589">
    <property type="entry name" value="DNA_helicase_ATP-dep_RecQ"/>
</dbReference>
<dbReference type="InterPro" id="IPR021110">
    <property type="entry name" value="DNA_rep_checkpnt_protein"/>
</dbReference>
<dbReference type="InterPro" id="IPR014001">
    <property type="entry name" value="Helicase_ATP-bd"/>
</dbReference>
<dbReference type="InterPro" id="IPR001650">
    <property type="entry name" value="Helicase_C-like"/>
</dbReference>
<dbReference type="InterPro" id="IPR027417">
    <property type="entry name" value="P-loop_NTPase"/>
</dbReference>
<dbReference type="NCBIfam" id="TIGR00614">
    <property type="entry name" value="recQ_fam"/>
    <property type="match status" value="1"/>
</dbReference>
<dbReference type="PANTHER" id="PTHR13710:SF108">
    <property type="entry name" value="ATP-DEPENDENT DNA HELICASE Q4"/>
    <property type="match status" value="1"/>
</dbReference>
<dbReference type="PANTHER" id="PTHR13710">
    <property type="entry name" value="DNA HELICASE RECQ FAMILY MEMBER"/>
    <property type="match status" value="1"/>
</dbReference>
<dbReference type="Pfam" id="PF00270">
    <property type="entry name" value="DEAD"/>
    <property type="match status" value="1"/>
</dbReference>
<dbReference type="Pfam" id="PF11719">
    <property type="entry name" value="Drc1-Sld2"/>
    <property type="match status" value="1"/>
</dbReference>
<dbReference type="Pfam" id="PF00271">
    <property type="entry name" value="Helicase_C"/>
    <property type="match status" value="1"/>
</dbReference>
<dbReference type="SMART" id="SM00487">
    <property type="entry name" value="DEXDc"/>
    <property type="match status" value="1"/>
</dbReference>
<dbReference type="SMART" id="SM00490">
    <property type="entry name" value="HELICc"/>
    <property type="match status" value="1"/>
</dbReference>
<dbReference type="SUPFAM" id="SSF52540">
    <property type="entry name" value="P-loop containing nucleoside triphosphate hydrolases"/>
    <property type="match status" value="1"/>
</dbReference>
<dbReference type="PROSITE" id="PS51192">
    <property type="entry name" value="HELICASE_ATP_BIND_1"/>
    <property type="match status" value="1"/>
</dbReference>
<dbReference type="PROSITE" id="PS51194">
    <property type="entry name" value="HELICASE_CTER"/>
    <property type="match status" value="1"/>
</dbReference>
<sequence length="1208" mass="133067">MERLRDVRERLQAWERAFRRQRGRRPSQDDVEAAPEETRALYREYRTLKRTTGQAGGGLRSSESLPAAAEEAPEPRCWGPHLNRAATKSPQSTPGRSRQGSVPDYGQRLKANLKGTLQAGPALGRRPWPLGRASSKASTPKPPGTGPVPSFAEKVSDEPPQLPEPQPRPGRLQHLQASLSQRLGSLDPGWLQRCHSEVPDFLGAPKACRPDLGSEESQLLIPGESAVLGPGAGSQGPEASAFQEVSIRVGSPQPSSSGGEKRRWNEEPWESPAQVQQESSQAGPPSEGAGAVAVEEDPPGEPVQAQPPQPCSSPSNPRYHGLSPSSQARAGKAEGTAPLHIFPRLARHDRGNYVRLNMKQKHYVRGRALRSRLLRKQAWKQKWRKKGECFGGGGATVTTKESCFLNEQFDHWAAQCPRPASEEDTDAVGPEPLVPSPQPVPEVPSLDPTVLPLYSLGPSGQLAETPAEVFQALEQLGHQAFRPGQERAVMRILSGISTLLVLPTGAGKSLCYQLPALLYSRRSPCLTLVVSPLLSLMDDQVSGLPPCLKAACIHSGMTRKQRESVLQKIRAAQVHVLMLTPEALVGAGGLPPAAQLPPVAFACIDEAHCLSQWSHNFRPCYLRVCKVLRERMGVHCFLGLTATATRRTASDVAQHLAVAEEPDLHGPAPVPTNLHLSVSMDRDTDQALLTLLQGKRFQNLDSIIIYCNRREDTERIAALLRTCLHAAWVPGSGGRAPKTTAEAYHAGMCSRERRRVQRAFMQGQLRVVVATVAFGMGLDRPDVRAVLHLGLPPSFESYVQAVGRAGRDGQPAHCHLFLQPQGEDLRELRRHVHADSTDFLAVKRLVQRVFPACTCTCTRPPSEQEGAVGGERPVPKYPPQEAEQLSHQAAPGPRRVCMGHERALPIQLTVQALDMPEEAIETLLCYLELHPHHWLELLATTYTHCRLNCPGGPAQLQALAHRCPPLAVCLAQQLPEDPGQGSSSVEFDMVKLVDSMGWELASVRRALCQLQWDHEPRTGVRRGTGVLVEFSELAFHLRSPGDLTAEEKDQICDFLYGRVQARERQALARLRRTFQAFHSVAFPSCGPCLEQQDEERSTRLKDLLGRYFEEEEGQEPGGMEDAQGPEPGQARLQDWEDQVRCDIRQFLSLRPEEKFSSRAVARIFHGIGSPCYPAQVYGQDRRFWRKYLHLSFHALVGLATEELLQVAR</sequence>
<comment type="function">
    <text evidence="12 16 17">An ATP-dependent DNA helicase which unwinds dsDNA with a 3'-overhang in a 3'-5' direction (PubMed:28653661). Does not unwind more than 18 bp of dsDNA (PubMed:28653661). May modulate chromosome segregation. The N-terminal domain (residues 1-54) binds DNA Y-shaped DNA better than ss- or dsDNA (PubMed:22730300). The core helicase domain binds ssDNA (PubMed:22730300, PubMed:28653661).</text>
</comment>
<comment type="catalytic activity">
    <reaction evidence="17">
        <text>Couples ATP hydrolysis with the unwinding of duplex DNA by translocating in the 3'-5' direction.</text>
        <dbReference type="EC" id="5.6.2.4"/>
    </reaction>
</comment>
<comment type="catalytic activity">
    <reaction>
        <text>ATP + H2O = ADP + phosphate + H(+)</text>
        <dbReference type="Rhea" id="RHEA:13065"/>
        <dbReference type="ChEBI" id="CHEBI:15377"/>
        <dbReference type="ChEBI" id="CHEBI:15378"/>
        <dbReference type="ChEBI" id="CHEBI:30616"/>
        <dbReference type="ChEBI" id="CHEBI:43474"/>
        <dbReference type="ChEBI" id="CHEBI:456216"/>
    </reaction>
</comment>
<comment type="cofactor">
    <cofactor evidence="17 22">
        <name>Zn(2+)</name>
        <dbReference type="ChEBI" id="CHEBI:29105"/>
    </cofactor>
    <text evidence="17 22">Binds a Zn(2+) ion per subunit.</text>
</comment>
<comment type="subunit">
    <text evidence="12 14 16">Interacts with UBR1 and UBR2 (PubMed:15317757). Interacts with MCM10; this interaction regulates RECQL4 unwinding activity (PubMed:19696745). Interacts (via residues 1-54) with TOPBP1 (PubMed:22730300).</text>
</comment>
<comment type="interaction">
    <interactant intactId="EBI-722861">
        <id>O94761</id>
    </interactant>
    <interactant intactId="EBI-710997">
        <id>P54274</id>
        <label>TERF1</label>
    </interactant>
    <organismsDiffer>false</organismsDiffer>
    <experiments>2</experiments>
</comment>
<comment type="subcellular location">
    <subcellularLocation>
        <location evidence="12">Cytoplasm</location>
    </subcellularLocation>
    <subcellularLocation>
        <location evidence="5">Nucleus</location>
    </subcellularLocation>
</comment>
<comment type="tissue specificity">
    <text evidence="18">Ubiquitously expressed, with highest levels in thymus and testis.</text>
</comment>
<comment type="induction">
    <text evidence="7">Up-regulated in actively dividing cells.</text>
</comment>
<comment type="disease" evidence="10">
    <disease id="DI-02245">
        <name>RAPADILINO syndrome</name>
        <acronym>RAPADILINOS</acronym>
        <description>Disease characterized by radial and patellar aplasia or hypoplasia.</description>
        <dbReference type="MIM" id="266280"/>
    </disease>
    <text>The disease is caused by variants affecting the gene represented in this entry.</text>
</comment>
<comment type="disease" evidence="13">
    <disease id="DI-00158">
        <name>Baller-Gerold syndrome</name>
        <acronym>BGS</acronym>
        <description>An autosomal recessive syndrome characterized by short stature, craniosynostosis, absent or hypoplastic radii, short and curved ulna, fused carpal bones and absent carpals, metacarpals and phalanges. Some patients manifest poikiloderma. Cases reported as Baller-Gerold syndrome have phenotypic overlap with several other disorders, including Saethre-Chotzen syndrome.</description>
        <dbReference type="MIM" id="218600"/>
    </disease>
    <text>The disease is caused by variants affecting the gene represented in this entry.</text>
</comment>
<comment type="disease" evidence="4 6 9 15">
    <disease id="DI-02274">
        <name>Rothmund-Thomson syndrome 2</name>
        <acronym>RTS2</acronym>
        <description>A form of Rothmund-Thomson syndrome, a disorder characterized by sparse hair, eyebrows and eyelashes, juvenile cataracts, and poikiloderma, a genodermatosis presenting with mottled pigmentation, telangiectasia and epidermal atrophy. Additional features are short stature, dysplastic nails, and skeletal and dental abnormalities. RTS2 is an autosomal recessive form frequently accompanied by an increased risk of osteosarcoma in childhood and skin cancer later in life.</description>
        <dbReference type="MIM" id="268400"/>
    </disease>
    <text>The disease is caused by variants affecting the gene represented in this entry.</text>
</comment>
<comment type="similarity">
    <text evidence="21">Belongs to the helicase family. RecQ subfamily.</text>
</comment>
<comment type="sequence caution" evidence="21">
    <conflict type="erroneous initiation">
        <sequence resource="EMBL-CDS" id="AAH13277"/>
    </conflict>
    <text>Truncated N-terminus.</text>
</comment>
<comment type="online information" name="Atlas of Genetics and Cytogenetics in Oncology and Haematology">
    <link uri="https://atlasgeneticsoncology.org/gene/285/RECQL4"/>
</comment>
<keyword id="KW-0002">3D-structure</keyword>
<keyword id="KW-0067">ATP-binding</keyword>
<keyword id="KW-0898">Cataract</keyword>
<keyword id="KW-0989">Craniosynostosis</keyword>
<keyword id="KW-0963">Cytoplasm</keyword>
<keyword id="KW-0225">Disease variant</keyword>
<keyword id="KW-0238">DNA-binding</keyword>
<keyword id="KW-0242">Dwarfism</keyword>
<keyword id="KW-0038">Ectodermal dysplasia</keyword>
<keyword id="KW-0347">Helicase</keyword>
<keyword id="KW-0378">Hydrolase</keyword>
<keyword id="KW-1063">Hypotrichosis</keyword>
<keyword id="KW-0413">Isomerase</keyword>
<keyword id="KW-0479">Metal-binding</keyword>
<keyword id="KW-0547">Nucleotide-binding</keyword>
<keyword id="KW-0539">Nucleus</keyword>
<keyword id="KW-0597">Phosphoprotein</keyword>
<keyword id="KW-1267">Proteomics identification</keyword>
<keyword id="KW-1185">Reference proteome</keyword>
<keyword id="KW-0862">Zinc</keyword>
<gene>
    <name type="primary">RECQL4</name>
    <name evidence="20" type="synonym">RECQ4</name>
</gene>
<feature type="chain" id="PRO_0000205053" description="ATP-dependent DNA helicase Q4">
    <location>
        <begin position="1"/>
        <end position="1208"/>
    </location>
</feature>
<feature type="domain" description="Helicase ATP-binding" evidence="1">
    <location>
        <begin position="489"/>
        <end position="662"/>
    </location>
</feature>
<feature type="domain" description="Helicase C-terminal" evidence="2">
    <location>
        <begin position="683"/>
        <end position="850"/>
    </location>
</feature>
<feature type="region of interest" description="Disordered" evidence="3">
    <location>
        <begin position="17"/>
        <end position="180"/>
    </location>
</feature>
<feature type="region of interest" description="Disordered" evidence="3">
    <location>
        <begin position="201"/>
        <end position="333"/>
    </location>
</feature>
<feature type="region of interest" description="Disordered" evidence="3">
    <location>
        <begin position="860"/>
        <end position="888"/>
    </location>
</feature>
<feature type="region of interest" description="Disordered" evidence="3">
    <location>
        <begin position="1111"/>
        <end position="1130"/>
    </location>
</feature>
<feature type="region of interest" description="Increases helicase activity about 5-fold (in a fragment starting at residue 427)" evidence="17">
    <location>
        <begin position="1117"/>
        <end position="1208"/>
    </location>
</feature>
<feature type="short sequence motif" description="DEAH box">
    <location>
        <begin position="605"/>
        <end position="608"/>
    </location>
</feature>
<feature type="compositionally biased region" description="Basic and acidic residues" evidence="3">
    <location>
        <begin position="36"/>
        <end position="47"/>
    </location>
</feature>
<feature type="compositionally biased region" description="Low complexity" evidence="3">
    <location>
        <begin position="61"/>
        <end position="70"/>
    </location>
</feature>
<feature type="compositionally biased region" description="Polar residues" evidence="3">
    <location>
        <begin position="86"/>
        <end position="100"/>
    </location>
</feature>
<feature type="compositionally biased region" description="Polar residues" evidence="3">
    <location>
        <begin position="273"/>
        <end position="283"/>
    </location>
</feature>
<feature type="binding site" evidence="1">
    <location>
        <begin position="502"/>
        <end position="509"/>
    </location>
    <ligand>
        <name>ATP</name>
        <dbReference type="ChEBI" id="CHEBI:30616"/>
    </ligand>
</feature>
<feature type="binding site" evidence="17 22">
    <location>
        <position position="853"/>
    </location>
    <ligand>
        <name>Zn(2+)</name>
        <dbReference type="ChEBI" id="CHEBI:29105"/>
    </ligand>
</feature>
<feature type="binding site" evidence="17 22">
    <location>
        <position position="855"/>
    </location>
    <ligand>
        <name>Zn(2+)</name>
        <dbReference type="ChEBI" id="CHEBI:29105"/>
    </ligand>
</feature>
<feature type="binding site" evidence="17 22">
    <location>
        <position position="897"/>
    </location>
    <ligand>
        <name>Zn(2+)</name>
        <dbReference type="ChEBI" id="CHEBI:29105"/>
    </ligand>
</feature>
<feature type="binding site" evidence="17 22">
    <location>
        <position position="900"/>
    </location>
    <ligand>
        <name>Zn(2+)</name>
        <dbReference type="ChEBI" id="CHEBI:29105"/>
    </ligand>
</feature>
<feature type="modified residue" description="Phosphoserine" evidence="25">
    <location>
        <position position="27"/>
    </location>
</feature>
<feature type="modified residue" description="Phosphoserine" evidence="25">
    <location>
        <position position="178"/>
    </location>
</feature>
<feature type="modified residue" description="Phosphoserine" evidence="25">
    <location>
        <position position="180"/>
    </location>
</feature>
<feature type="sequence variant" id="VAR_025117" description="In dbSNP:rs35198096." evidence="19">
    <original>Q</original>
    <variation>R</variation>
    <location>
        <position position="54"/>
    </location>
</feature>
<feature type="sequence variant" id="VAR_025118" description="In dbSNP:rs34642881." evidence="9 19">
    <original>E</original>
    <variation>G</variation>
    <location>
        <position position="71"/>
    </location>
</feature>
<feature type="sequence variant" id="VAR_025119" description="In dbSNP:rs2721190." evidence="5 18 19">
    <original>S</original>
    <variation>P</variation>
    <location>
        <position position="92"/>
    </location>
</feature>
<feature type="sequence variant" id="VAR_083742" description="In dbSNP:rs199543866." evidence="9">
    <original>P</original>
    <variation>L</variation>
    <location>
        <position position="103"/>
    </location>
</feature>
<feature type="sequence variant" id="VAR_025120" description="In dbSNP:rs34371341." evidence="19">
    <original>G</original>
    <variation>S</variation>
    <location>
        <position position="189"/>
    </location>
</feature>
<feature type="sequence variant" id="VAR_023295" description="In dbSNP:rs4244612." evidence="8 19">
    <original>E</original>
    <variation>D</variation>
    <location>
        <position position="267"/>
    </location>
</feature>
<feature type="sequence variant" id="VAR_025121" description="In dbSNP:rs34103564." evidence="19">
    <original>A</original>
    <variation>T</variation>
    <location>
        <position position="273"/>
    </location>
</feature>
<feature type="sequence variant" id="VAR_025122" description="In dbSNP:rs34633809." evidence="19">
    <original>E</original>
    <variation>K</variation>
    <location>
        <position position="301"/>
    </location>
</feature>
<feature type="sequence variant" id="VAR_023296" description="In dbSNP:rs374743591." evidence="11">
    <original>R</original>
    <variation>Q</variation>
    <location>
        <position position="355"/>
    </location>
</feature>
<feature type="sequence variant" id="VAR_023297" description="In dbSNP:rs557142414." evidence="11">
    <original>P</original>
    <variation>S</variation>
    <location>
        <position position="441"/>
    </location>
</feature>
<feature type="sequence variant" id="VAR_025123" description="In dbSNP:rs35407712." evidence="9 19">
    <original>R</original>
    <variation>C</variation>
    <location>
        <position position="522"/>
    </location>
</feature>
<feature type="sequence variant" id="VAR_025124" description="In dbSNP:rs35842750." evidence="19">
    <original>R</original>
    <variation>H</variation>
    <location>
        <position position="522"/>
    </location>
</feature>
<feature type="sequence variant" id="VAR_026590" description="In dbSNP:rs754735053." evidence="13">
    <original>S</original>
    <variation>T</variation>
    <location>
        <position position="523"/>
    </location>
</feature>
<feature type="sequence variant" id="VAR_025125" description="In dbSNP:rs2721191." evidence="19">
    <original>P</original>
    <variation>L</variation>
    <location>
        <position position="591"/>
    </location>
</feature>
<feature type="sequence variant" id="VAR_083743" description="In RTS2; dbSNP:rs786200890." evidence="15">
    <original>LTA</original>
    <variation>P</variation>
    <location>
        <begin position="640"/>
        <end position="642"/>
    </location>
</feature>
<feature type="sequence variant" id="VAR_083744" description="In RTS2; dbSNP:rs137853229." evidence="4 9">
    <location>
        <begin position="757"/>
        <end position="1208"/>
    </location>
</feature>
<feature type="sequence variant" id="VAR_057125" description="In dbSNP:rs1034558903.">
    <original>P</original>
    <variation>L</variation>
    <location>
        <position position="793"/>
    </location>
</feature>
<feature type="sequence variant" id="VAR_025126" description="In dbSNP:rs35098923." evidence="19">
    <original>P</original>
    <variation>S</variation>
    <location>
        <position position="793"/>
    </location>
</feature>
<feature type="sequence variant" id="VAR_025127" description="In dbSNP:rs34293591." evidence="9 19">
    <original>V</original>
    <variation>M</variation>
    <location>
        <position position="799"/>
    </location>
</feature>
<feature type="sequence variant" id="VAR_023298">
    <location>
        <begin position="857"/>
        <end position="858"/>
    </location>
</feature>
<feature type="sequence variant" id="VAR_025128" description="In dbSNP:rs33972310." evidence="19">
    <original>P</original>
    <variation>T</variation>
    <location>
        <position position="964"/>
    </location>
</feature>
<feature type="sequence variant" id="VAR_025129" description="In dbSNP:rs35070885." evidence="19">
    <original>E</original>
    <variation>K</variation>
    <location>
        <position position="976"/>
    </location>
</feature>
<feature type="sequence variant" id="VAR_025130" description="In dbSNP:rs36023964." evidence="19">
    <original>R</original>
    <variation>W</variation>
    <location>
        <position position="1004"/>
    </location>
</feature>
<feature type="sequence variant" id="VAR_023299" description="In dbSNP:rs4251691." evidence="8 19">
    <original>R</original>
    <variation>Q</variation>
    <location>
        <position position="1005"/>
    </location>
</feature>
<feature type="sequence variant" id="VAR_025131" description="In dbSNP:rs34666647." evidence="9 19">
    <original>R</original>
    <variation>Q</variation>
    <location>
        <position position="1021"/>
    </location>
</feature>
<feature type="sequence variant" id="VAR_026591" description="In BGS; dbSNP:rs137853232." evidence="13">
    <original>R</original>
    <variation>W</variation>
    <location>
        <position position="1021"/>
    </location>
</feature>
<feature type="sequence variant" id="VAR_025132" description="In dbSNP:rs35348691." evidence="19">
    <original>A</original>
    <variation>T</variation>
    <location>
        <position position="1045"/>
    </location>
</feature>
<feature type="sequence variant" id="VAR_025133" description="In dbSNP:rs36078464." evidence="19">
    <original>G</original>
    <variation>D</variation>
    <location>
        <position position="1105"/>
    </location>
</feature>
<feature type="sequence variant" id="VAR_025134" description="In dbSNP:rs34915097." evidence="19">
    <original>G</original>
    <variation>S</variation>
    <location>
        <position position="1105"/>
    </location>
</feature>
<feature type="sequence variant" id="VAR_025135" description="In dbSNP:rs34236392." evidence="19">
    <original>R</original>
    <variation>H</variation>
    <location>
        <position position="1106"/>
    </location>
</feature>
<feature type="sequence variant" id="VAR_025136" description="In dbSNP:rs35101495." evidence="19">
    <original>G</original>
    <variation>R</variation>
    <location>
        <position position="1113"/>
    </location>
</feature>
<feature type="sequence variant" id="VAR_025137" description="In dbSNP:rs35346077." evidence="19">
    <original>S</original>
    <variation>F</variation>
    <location>
        <position position="1148"/>
    </location>
</feature>
<feature type="sequence variant" id="VAR_083745" description="In dbSNP:rs772265082." evidence="9">
    <original>P</original>
    <variation>L</variation>
    <location>
        <position position="1170"/>
    </location>
</feature>
<feature type="mutagenesis site" description="No helicase activity (in a fragment of residues 427-1208)." evidence="17">
    <original>K</original>
    <variation>A</variation>
    <location>
        <position position="508"/>
    </location>
</feature>
<feature type="mutagenesis site" description="No helicase activity (in a fragment of residues 427-1208)." evidence="17">
    <original>D</original>
    <variation>A</variation>
    <location>
        <position position="605"/>
    </location>
</feature>
<feature type="mutagenesis site" description="Loss of helicase activity, 20% ATPase activity (in a fragment of residues 427-1208)." evidence="17">
    <original>R</original>
    <variation>L</variation>
    <location>
        <position position="618"/>
    </location>
</feature>
<feature type="mutagenesis site" description="About 50% reduction in helicase velocity (in a fragment of residues 427-1208)." evidence="17">
    <location>
        <begin position="944"/>
        <end position="1032"/>
    </location>
</feature>
<feature type="mutagenesis site" description="Decreases helicase activity 5-fold, decreased ssDNA-binding (in a fragment of residues 427-1208)." evidence="17">
    <location>
        <begin position="1117"/>
        <end position="1208"/>
    </location>
</feature>
<feature type="helix" evidence="26">
    <location>
        <begin position="1"/>
        <end position="21"/>
    </location>
</feature>
<feature type="helix" evidence="26">
    <location>
        <begin position="28"/>
        <end position="31"/>
    </location>
</feature>
<feature type="helix" evidence="26">
    <location>
        <begin position="36"/>
        <end position="52"/>
    </location>
</feature>
<feature type="helix" evidence="27">
    <location>
        <begin position="458"/>
        <end position="460"/>
    </location>
</feature>
<feature type="helix" evidence="27">
    <location>
        <begin position="467"/>
        <end position="476"/>
    </location>
</feature>
<feature type="helix" evidence="27">
    <location>
        <begin position="485"/>
        <end position="492"/>
    </location>
</feature>
<feature type="turn" evidence="27">
    <location>
        <begin position="493"/>
        <end position="495"/>
    </location>
</feature>
<feature type="strand" evidence="27">
    <location>
        <begin position="498"/>
        <end position="501"/>
    </location>
</feature>
<feature type="strand" evidence="27">
    <location>
        <begin position="503"/>
        <end position="505"/>
    </location>
</feature>
<feature type="turn" evidence="27">
    <location>
        <begin position="506"/>
        <end position="509"/>
    </location>
</feature>
<feature type="helix" evidence="27">
    <location>
        <begin position="510"/>
        <end position="522"/>
    </location>
</feature>
<feature type="strand" evidence="27">
    <location>
        <begin position="526"/>
        <end position="530"/>
    </location>
</feature>
<feature type="helix" evidence="27">
    <location>
        <begin position="533"/>
        <end position="536"/>
    </location>
</feature>
<feature type="turn" evidence="27">
    <location>
        <begin position="544"/>
        <end position="546"/>
    </location>
</feature>
<feature type="strand" evidence="27">
    <location>
        <begin position="548"/>
        <end position="551"/>
    </location>
</feature>
<feature type="turn" evidence="27">
    <location>
        <begin position="556"/>
        <end position="558"/>
    </location>
</feature>
<feature type="helix" evidence="27">
    <location>
        <begin position="559"/>
        <end position="570"/>
    </location>
</feature>
<feature type="strand" evidence="27">
    <location>
        <begin position="575"/>
        <end position="579"/>
    </location>
</feature>
<feature type="helix" evidence="27">
    <location>
        <begin position="581"/>
        <end position="585"/>
    </location>
</feature>
<feature type="strand" evidence="27">
    <location>
        <begin position="586"/>
        <end position="588"/>
    </location>
</feature>
<feature type="turn" evidence="27">
    <location>
        <begin position="593"/>
        <end position="595"/>
    </location>
</feature>
<feature type="strand" evidence="27">
    <location>
        <begin position="599"/>
        <end position="605"/>
    </location>
</feature>
<feature type="helix" evidence="27">
    <location>
        <begin position="607"/>
        <end position="610"/>
    </location>
</feature>
<feature type="helix" evidence="27">
    <location>
        <begin position="620"/>
        <end position="630"/>
    </location>
</feature>
<feature type="strand" evidence="27">
    <location>
        <begin position="637"/>
        <end position="642"/>
    </location>
</feature>
<feature type="helix" evidence="27">
    <location>
        <begin position="646"/>
        <end position="655"/>
    </location>
</feature>
<feature type="strand" evidence="27">
    <location>
        <begin position="674"/>
        <end position="679"/>
    </location>
</feature>
<feature type="helix" evidence="27">
    <location>
        <begin position="684"/>
        <end position="693"/>
    </location>
</feature>
<feature type="turn" evidence="27">
    <location>
        <begin position="695"/>
        <end position="699"/>
    </location>
</feature>
<feature type="strand" evidence="27">
    <location>
        <begin position="703"/>
        <end position="709"/>
    </location>
</feature>
<feature type="helix" evidence="27">
    <location>
        <begin position="710"/>
        <end position="723"/>
    </location>
</feature>
<feature type="strand" evidence="27">
    <location>
        <begin position="739"/>
        <end position="744"/>
    </location>
</feature>
<feature type="helix" evidence="27">
    <location>
        <begin position="750"/>
        <end position="761"/>
    </location>
</feature>
<feature type="strand" evidence="27">
    <location>
        <begin position="765"/>
        <end position="771"/>
    </location>
</feature>
<feature type="turn" evidence="27">
    <location>
        <begin position="772"/>
        <end position="774"/>
    </location>
</feature>
<feature type="strand" evidence="27">
    <location>
        <begin position="785"/>
        <end position="790"/>
    </location>
</feature>
<feature type="helix" evidence="27">
    <location>
        <begin position="795"/>
        <end position="802"/>
    </location>
</feature>
<feature type="strand" evidence="27">
    <location>
        <begin position="807"/>
        <end position="810"/>
    </location>
</feature>
<feature type="strand" evidence="27">
    <location>
        <begin position="812"/>
        <end position="817"/>
    </location>
</feature>
<feature type="helix" evidence="27">
    <location>
        <begin position="823"/>
        <end position="835"/>
    </location>
</feature>
<feature type="helix" evidence="27">
    <location>
        <begin position="839"/>
        <end position="849"/>
    </location>
</feature>
<feature type="strand" evidence="27">
    <location>
        <begin position="900"/>
        <end position="905"/>
    </location>
</feature>
<feature type="helix" evidence="27">
    <location>
        <begin position="906"/>
        <end position="913"/>
    </location>
</feature>
<feature type="helix" evidence="27">
    <location>
        <begin position="917"/>
        <end position="929"/>
    </location>
</feature>
<feature type="strand" evidence="27">
    <location>
        <begin position="931"/>
        <end position="933"/>
    </location>
</feature>
<feature type="strand" evidence="27">
    <location>
        <begin position="936"/>
        <end position="948"/>
    </location>
</feature>
<feature type="helix" evidence="27">
    <location>
        <begin position="952"/>
        <end position="957"/>
    </location>
</feature>
<feature type="turn" evidence="27">
    <location>
        <begin position="958"/>
        <end position="962"/>
    </location>
</feature>
<feature type="helix" evidence="27">
    <location>
        <begin position="964"/>
        <end position="972"/>
    </location>
</feature>
<feature type="strand" evidence="27">
    <location>
        <begin position="985"/>
        <end position="988"/>
    </location>
</feature>
<feature type="helix" evidence="27">
    <location>
        <begin position="989"/>
        <end position="996"/>
    </location>
</feature>
<feature type="helix" evidence="27">
    <location>
        <begin position="1000"/>
        <end position="1008"/>
    </location>
</feature>
<feature type="helix" evidence="27">
    <location>
        <begin position="1009"/>
        <end position="1011"/>
    </location>
</feature>
<feature type="strand" evidence="27">
    <location>
        <begin position="1016"/>
        <end position="1018"/>
    </location>
</feature>
<feature type="strand" evidence="27">
    <location>
        <begin position="1027"/>
        <end position="1039"/>
    </location>
</feature>
<feature type="helix" evidence="27">
    <location>
        <begin position="1045"/>
        <end position="1078"/>
    </location>
</feature>
<feature type="strand" evidence="27">
    <location>
        <begin position="1082"/>
        <end position="1085"/>
    </location>
</feature>
<feature type="helix" evidence="27">
    <location>
        <begin position="1086"/>
        <end position="1088"/>
    </location>
</feature>
<feature type="strand" evidence="27">
    <location>
        <begin position="1089"/>
        <end position="1091"/>
    </location>
</feature>
<feature type="helix" evidence="27">
    <location>
        <begin position="1094"/>
        <end position="1108"/>
    </location>
</feature>
<reference key="1">
    <citation type="journal article" date="1998" name="Genomics">
        <title>Cloning of two new human helicase genes of the RecQ family: biological significance of multiple species in higher eukaryotes.</title>
        <authorList>
            <person name="Kitao S."/>
            <person name="Ohsugi I."/>
            <person name="Ichikawa K."/>
            <person name="Goto M."/>
            <person name="Furuichi Y."/>
            <person name="Shimamoto A."/>
        </authorList>
    </citation>
    <scope>NUCLEOTIDE SEQUENCE [MRNA]</scope>
    <scope>TISSUE SPECIFICITY</scope>
    <scope>VARIANT PRO-92</scope>
    <source>
        <tissue>Testis</tissue>
    </source>
</reference>
<reference key="2">
    <citation type="journal article" date="1999" name="Genomics">
        <title>Rothmund-Thomson syndrome responsible gene, RECQL4: genomic structure and products.</title>
        <authorList>
            <person name="Kitao S."/>
            <person name="Lindor N.M."/>
            <person name="Shiratori M."/>
            <person name="Furuichi Y."/>
            <person name="Shimamoto A."/>
        </authorList>
    </citation>
    <scope>NUCLEOTIDE SEQUENCE [GENOMIC DNA]</scope>
    <scope>SUBCELLULAR LOCATION</scope>
    <scope>VARIANT PRO-92</scope>
</reference>
<reference key="3">
    <citation type="submission" date="2005-08" db="EMBL/GenBank/DDBJ databases">
        <authorList>
            <consortium name="NIEHS SNPs program"/>
        </authorList>
    </citation>
    <scope>NUCLEOTIDE SEQUENCE [GENOMIC DNA]</scope>
    <scope>VARIANTS ARG-54; GLY-71; PRO-92; SER-189; ASP-267; THR-273; LYS-301; CYS-522; HIS-522; LEU-591; SER-793; MET-799; THR-964; LYS-976; TRP-1004; GLN-1005; GLN-1021; THR-1045; SER-1105; ASP-1105; HIS-1106; ARG-1113 AND PHE-1148</scope>
</reference>
<reference key="4">
    <citation type="journal article" date="2006" name="Nature">
        <title>DNA sequence and analysis of human chromosome 8.</title>
        <authorList>
            <person name="Nusbaum C."/>
            <person name="Mikkelsen T.S."/>
            <person name="Zody M.C."/>
            <person name="Asakawa S."/>
            <person name="Taudien S."/>
            <person name="Garber M."/>
            <person name="Kodira C.D."/>
            <person name="Schueler M.G."/>
            <person name="Shimizu A."/>
            <person name="Whittaker C.A."/>
            <person name="Chang J.L."/>
            <person name="Cuomo C.A."/>
            <person name="Dewar K."/>
            <person name="FitzGerald M.G."/>
            <person name="Yang X."/>
            <person name="Allen N.R."/>
            <person name="Anderson S."/>
            <person name="Asakawa T."/>
            <person name="Blechschmidt K."/>
            <person name="Bloom T."/>
            <person name="Borowsky M.L."/>
            <person name="Butler J."/>
            <person name="Cook A."/>
            <person name="Corum B."/>
            <person name="DeArellano K."/>
            <person name="DeCaprio D."/>
            <person name="Dooley K.T."/>
            <person name="Dorris L. III"/>
            <person name="Engels R."/>
            <person name="Gloeckner G."/>
            <person name="Hafez N."/>
            <person name="Hagopian D.S."/>
            <person name="Hall J.L."/>
            <person name="Ishikawa S.K."/>
            <person name="Jaffe D.B."/>
            <person name="Kamat A."/>
            <person name="Kudoh J."/>
            <person name="Lehmann R."/>
            <person name="Lokitsang T."/>
            <person name="Macdonald P."/>
            <person name="Major J.E."/>
            <person name="Matthews C.D."/>
            <person name="Mauceli E."/>
            <person name="Menzel U."/>
            <person name="Mihalev A.H."/>
            <person name="Minoshima S."/>
            <person name="Murayama Y."/>
            <person name="Naylor J.W."/>
            <person name="Nicol R."/>
            <person name="Nguyen C."/>
            <person name="O'Leary S.B."/>
            <person name="O'Neill K."/>
            <person name="Parker S.C.J."/>
            <person name="Polley A."/>
            <person name="Raymond C.K."/>
            <person name="Reichwald K."/>
            <person name="Rodriguez J."/>
            <person name="Sasaki T."/>
            <person name="Schilhabel M."/>
            <person name="Siddiqui R."/>
            <person name="Smith C.L."/>
            <person name="Sneddon T.P."/>
            <person name="Talamas J.A."/>
            <person name="Tenzin P."/>
            <person name="Topham K."/>
            <person name="Venkataraman V."/>
            <person name="Wen G."/>
            <person name="Yamazaki S."/>
            <person name="Young S.K."/>
            <person name="Zeng Q."/>
            <person name="Zimmer A.R."/>
            <person name="Rosenthal A."/>
            <person name="Birren B.W."/>
            <person name="Platzer M."/>
            <person name="Shimizu N."/>
            <person name="Lander E.S."/>
        </authorList>
    </citation>
    <scope>NUCLEOTIDE SEQUENCE [LARGE SCALE GENOMIC DNA]</scope>
</reference>
<reference key="5">
    <citation type="journal article" date="2004" name="Genome Res.">
        <title>The status, quality, and expansion of the NIH full-length cDNA project: the Mammalian Gene Collection (MGC).</title>
        <authorList>
            <consortium name="The MGC Project Team"/>
        </authorList>
    </citation>
    <scope>NUCLEOTIDE SEQUENCE [LARGE SCALE MRNA] OF 468-1208</scope>
    <source>
        <tissue>Lymph</tissue>
        <tissue>Placenta</tissue>
    </source>
</reference>
<reference key="6">
    <citation type="journal article" date="1999" name="Nat. Genet.">
        <title>Mutations in RECQL4 cause a subset of cases of Rothmund-Thomson syndrome.</title>
        <authorList>
            <person name="Kitao S."/>
            <person name="Shimamoto A."/>
            <person name="Goto M."/>
            <person name="Miller R.W."/>
            <person name="Smithson W.A."/>
            <person name="Lindor N.M."/>
            <person name="Furuichi Y."/>
        </authorList>
    </citation>
    <scope>INVOLVEMENT IN RTS2</scope>
    <scope>VARIANT RTS2 757-GLN--ARG-1208 DEL</scope>
</reference>
<reference key="7">
    <citation type="journal article" date="2000" name="Oncogene">
        <title>Differential regulation of human RecQ family helicases in cell transformation and cell cycle.</title>
        <authorList>
            <person name="Kawabe T."/>
            <person name="Tsuyama N."/>
            <person name="Kitao S."/>
            <person name="Nishikawa K."/>
            <person name="Shimamoto A."/>
            <person name="Shiratori M."/>
            <person name="Matsumoto T."/>
            <person name="Anno K."/>
            <person name="Sato T."/>
            <person name="Mitsui Y."/>
            <person name="Seki M."/>
            <person name="Enomoto T."/>
            <person name="Goto M."/>
            <person name="Ellis N.A."/>
            <person name="Ide T."/>
            <person name="Furuichi Y."/>
            <person name="Sugimoto M."/>
        </authorList>
    </citation>
    <scope>INDUCTION</scope>
</reference>
<reference key="8">
    <citation type="journal article" date="2000" name="Am. J. Med. Genet.">
        <title>Rothmund-Thomson syndrome due to RECQ4 helicase mutations: report and clinical and molecular comparisons with Bloom syndrome and Werner syndrome.</title>
        <authorList>
            <person name="Lindor N.M."/>
            <person name="Furuichi Y."/>
            <person name="Kitao S."/>
            <person name="Shimamoto A."/>
            <person name="Arndt C."/>
            <person name="Jalal S."/>
        </authorList>
    </citation>
    <scope>INVOLVEMENT IN RTS2</scope>
</reference>
<reference key="9">
    <citation type="journal article" date="2003" name="Hum. Mol. Genet.">
        <title>Molecular defect of RAPADILINO syndrome expands the phenotype spectrum of RECQL diseases.</title>
        <authorList>
            <person name="Siitonen H.A."/>
            <person name="Kopra O."/>
            <person name="Kaeaeriaeinen H."/>
            <person name="Haravuori H."/>
            <person name="Winter R.M."/>
            <person name="Saeaemaenen A.-M."/>
            <person name="Peltonen L."/>
            <person name="Kestilae M."/>
        </authorList>
    </citation>
    <scope>INVOLVEMENT IN RAPADILINOS</scope>
</reference>
<reference key="10">
    <citation type="journal article" date="2004" name="Hum. Mol. Genet.">
        <title>RECQL4, mutated in the Rothmund-Thomson and RAPADILINO syndromes, interacts with ubiquitin ligases UBR1 and UBR2 of the N-end rule pathway.</title>
        <authorList>
            <person name="Yin J."/>
            <person name="Kwon Y.T."/>
            <person name="Varshavsky A."/>
            <person name="Wang W."/>
        </authorList>
    </citation>
    <scope>INTERACTION WITH UBR1 AND UBR2</scope>
    <scope>SUBCELLULAR LOCATION</scope>
    <scope>FUNCTION</scope>
    <scope>IDENTIFICATION BY MASS SPECTROMETRY</scope>
</reference>
<reference key="11">
    <citation type="journal article" date="2009" name="EMBO J.">
        <title>MCM10 mediates RECQ4 association with MCM2-7 helicase complex during DNA replication.</title>
        <authorList>
            <person name="Xu X."/>
            <person name="Rochette P.J."/>
            <person name="Feyissa E.A."/>
            <person name="Su T.V."/>
            <person name="Liu Y."/>
        </authorList>
    </citation>
    <scope>INTERACTION WITH MCM10</scope>
</reference>
<reference key="12">
    <citation type="journal article" date="2013" name="J. Proteome Res.">
        <title>Toward a comprehensive characterization of a human cancer cell phosphoproteome.</title>
        <authorList>
            <person name="Zhou H."/>
            <person name="Di Palma S."/>
            <person name="Preisinger C."/>
            <person name="Peng M."/>
            <person name="Polat A.N."/>
            <person name="Heck A.J."/>
            <person name="Mohammed S."/>
        </authorList>
    </citation>
    <scope>PHOSPHORYLATION [LARGE SCALE ANALYSIS] AT SER-27; SER-178 AND SER-180</scope>
    <scope>IDENTIFICATION BY MASS SPECTROMETRY [LARGE SCALE ANALYSIS]</scope>
    <source>
        <tissue>Cervix carcinoma</tissue>
        <tissue>Erythroleukemia</tissue>
    </source>
</reference>
<reference evidence="23" key="13">
    <citation type="journal article" date="2012" name="Nucleic Acids Res.">
        <title>The N-terminus of the human RecQL4 helicase is a homeodomain-like DNA interaction motif.</title>
        <authorList>
            <person name="Ohlenschlager O."/>
            <person name="Kuhnert A."/>
            <person name="Schneider A."/>
            <person name="Haumann S."/>
            <person name="Bellstedt P."/>
            <person name="Keller H."/>
            <person name="Saluz H.P."/>
            <person name="Hortschansky P."/>
            <person name="Hanel F."/>
            <person name="Grosse F."/>
            <person name="Gorlach M."/>
            <person name="Pospiech H."/>
        </authorList>
    </citation>
    <scope>STRUCTURE BY NMR OF 1-54</scope>
    <scope>INTERACTION WITH TOPB1</scope>
    <scope>DNA-BINDING</scope>
</reference>
<reference evidence="24" key="14">
    <citation type="journal article" date="2017" name="Nat. Commun.">
        <title>The structural and functional characterization of human RecQ4 reveals insights into its helicase mechanism.</title>
        <authorList>
            <person name="Kaiser S."/>
            <person name="Sauer F."/>
            <person name="Kisker C."/>
        </authorList>
    </citation>
    <scope>X-RAY CRYSTALLOGRAPHY (2.75 ANGSTROMS) OF 427-1116 IN COMPLEX WITH ZINC</scope>
    <scope>FUNCTION AS A 3'-5' HELICASE</scope>
    <scope>MUTAGENESIS OF LYS-508; ASP-605; ARG-618; 944-HIS--GLU-1032 AND 1117-GLY--ARG-1208</scope>
    <scope>DNA-BINDING</scope>
</reference>
<reference key="15">
    <citation type="journal article" date="2003" name="J. Hum. Genet.">
        <title>Identification of two novel RECQL4exonic SNPs and genomic characterization of the IVS12 minisatellite.</title>
        <authorList>
            <person name="Roversi G."/>
            <person name="Beghini A."/>
            <person name="Zambruno G."/>
            <person name="Paradisi M."/>
            <person name="Larizza L."/>
        </authorList>
    </citation>
    <scope>VARIANTS ASP-267 AND GLN-1005</scope>
</reference>
<reference key="16">
    <citation type="journal article" date="2003" name="J. Natl. Cancer Inst.">
        <title>Association between osteosarcoma and deleterious mutations in the RECQL4 gene in Rothmund-Thomson syndrome.</title>
        <authorList>
            <person name="Wang L.L."/>
            <person name="Gannavarapu A."/>
            <person name="Kozinetz C.A."/>
            <person name="Levy M.L."/>
            <person name="Lewis R.A."/>
            <person name="Chintagumpala M.M."/>
            <person name="Ruiz-Maldanado R."/>
            <person name="Contreras-Ruiz J."/>
            <person name="Cunniff C."/>
            <person name="Erickson R.P."/>
            <person name="Lev D."/>
            <person name="Rogers M."/>
            <person name="Zackai E.H."/>
            <person name="Plon S.E."/>
        </authorList>
    </citation>
    <scope>VARIANT RTS2 757-GLN--ARG-1208 DEL</scope>
    <scope>VARIANTS GLY-71; LEU-103; CYS-522; MET-799; GLN-1021 AND LEU-1170</scope>
</reference>
<reference key="17">
    <citation type="journal article" date="2004" name="Int. J. Cancer">
        <title>Mutation analysis of the RECQL4 gene in sporadic osteosarcomas.</title>
        <authorList>
            <person name="Nishijo K."/>
            <person name="Nakayama T."/>
            <person name="Aoyama T."/>
            <person name="Okamoto T."/>
            <person name="Ishibe T."/>
            <person name="Yasura K."/>
            <person name="Shima Y."/>
            <person name="Shibata K.R."/>
            <person name="Tsuboyama T."/>
            <person name="Nakamura T."/>
            <person name="Toguchida J."/>
        </authorList>
    </citation>
    <scope>VARIANTS GLN-355; SER-441 AND 857-CYS--THR-858 DEL</scope>
</reference>
<reference key="18">
    <citation type="journal article" date="2006" name="J. Med. Genet.">
        <title>Revisiting the craniosynostosis-radial ray hypoplasia association: Baller-Gerold syndrome caused by mutations in the RECQL4 gene.</title>
        <authorList>
            <person name="Van Maldergem L."/>
            <person name="Siitonen H.A."/>
            <person name="Jalkh N."/>
            <person name="Chouery E."/>
            <person name="De Roy M."/>
            <person name="Delague V."/>
            <person name="Muenke M."/>
            <person name="Jabs E.W."/>
            <person name="Cai J."/>
            <person name="Wang L.L."/>
            <person name="Plon S.E."/>
            <person name="Fourneau C."/>
            <person name="Kestilae M."/>
            <person name="Gillerot Y."/>
            <person name="Megarbane A."/>
            <person name="Verloes A."/>
        </authorList>
    </citation>
    <scope>VARIANT BGS TRP-1021</scope>
    <scope>VARIANT THR-523</scope>
</reference>
<reference key="19">
    <citation type="journal article" date="2010" name="Am. J. Med. Genet. A">
        <title>Multiple malignant diseases in a patient with Rothmund-Thomson syndrome with RECQL4 mutations: Case report and literature review.</title>
        <authorList>
            <person name="Simon T."/>
            <person name="Kohlhase J."/>
            <person name="Wilhelm C."/>
            <person name="Kochanek M."/>
            <person name="De Carolis B."/>
            <person name="Berthold F."/>
        </authorList>
    </citation>
    <scope>VARIANT RTS2 640-LEU--ALA-642 DELINS PRO</scope>
</reference>
<proteinExistence type="evidence at protein level"/>
<evidence type="ECO:0000255" key="1">
    <source>
        <dbReference type="PROSITE-ProRule" id="PRU00541"/>
    </source>
</evidence>
<evidence type="ECO:0000255" key="2">
    <source>
        <dbReference type="PROSITE-ProRule" id="PRU00542"/>
    </source>
</evidence>
<evidence type="ECO:0000256" key="3">
    <source>
        <dbReference type="SAM" id="MobiDB-lite"/>
    </source>
</evidence>
<evidence type="ECO:0000269" key="4">
    <source>
    </source>
</evidence>
<evidence type="ECO:0000269" key="5">
    <source>
    </source>
</evidence>
<evidence type="ECO:0000269" key="6">
    <source>
    </source>
</evidence>
<evidence type="ECO:0000269" key="7">
    <source>
    </source>
</evidence>
<evidence type="ECO:0000269" key="8">
    <source>
    </source>
</evidence>
<evidence type="ECO:0000269" key="9">
    <source>
    </source>
</evidence>
<evidence type="ECO:0000269" key="10">
    <source>
    </source>
</evidence>
<evidence type="ECO:0000269" key="11">
    <source>
    </source>
</evidence>
<evidence type="ECO:0000269" key="12">
    <source>
    </source>
</evidence>
<evidence type="ECO:0000269" key="13">
    <source>
    </source>
</evidence>
<evidence type="ECO:0000269" key="14">
    <source>
    </source>
</evidence>
<evidence type="ECO:0000269" key="15">
    <source>
    </source>
</evidence>
<evidence type="ECO:0000269" key="16">
    <source>
    </source>
</evidence>
<evidence type="ECO:0000269" key="17">
    <source>
    </source>
</evidence>
<evidence type="ECO:0000269" key="18">
    <source>
    </source>
</evidence>
<evidence type="ECO:0000269" key="19">
    <source ref="3"/>
</evidence>
<evidence type="ECO:0000303" key="20">
    <source>
    </source>
</evidence>
<evidence type="ECO:0000305" key="21"/>
<evidence type="ECO:0000312" key="22">
    <source>
        <dbReference type="PDB" id="5LST"/>
    </source>
</evidence>
<evidence type="ECO:0007744" key="23">
    <source>
        <dbReference type="PDB" id="2KMU"/>
    </source>
</evidence>
<evidence type="ECO:0007744" key="24">
    <source>
        <dbReference type="PDB" id="5LST"/>
    </source>
</evidence>
<evidence type="ECO:0007744" key="25">
    <source>
    </source>
</evidence>
<evidence type="ECO:0007829" key="26">
    <source>
        <dbReference type="PDB" id="2KMU"/>
    </source>
</evidence>
<evidence type="ECO:0007829" key="27">
    <source>
        <dbReference type="PDB" id="5LST"/>
    </source>
</evidence>
<protein>
    <recommendedName>
        <fullName>ATP-dependent DNA helicase Q4</fullName>
        <ecNumber evidence="17">5.6.2.4</ecNumber>
    </recommendedName>
    <alternativeName>
        <fullName evidence="21">DNA 3'-5' helicase RecQ4</fullName>
    </alternativeName>
    <alternativeName>
        <fullName>DNA helicase, RecQ-like type 4</fullName>
        <shortName>RecQ4</shortName>
    </alternativeName>
    <alternativeName>
        <fullName>RTS</fullName>
    </alternativeName>
    <alternativeName>
        <fullName>RecQ protein-like 4</fullName>
    </alternativeName>
</protein>